<evidence type="ECO:0000255" key="1">
    <source>
        <dbReference type="HAMAP-Rule" id="MF_01571"/>
    </source>
</evidence>
<proteinExistence type="inferred from homology"/>
<feature type="chain" id="PRO_0000249117" description="Proline--tRNA ligase 2">
    <location>
        <begin position="1"/>
        <end position="476"/>
    </location>
</feature>
<protein>
    <recommendedName>
        <fullName evidence="1">Proline--tRNA ligase 2</fullName>
        <ecNumber evidence="1">6.1.1.15</ecNumber>
    </recommendedName>
    <alternativeName>
        <fullName evidence="1">Prolyl-tRNA synthetase 2</fullName>
        <shortName evidence="1">ProRS 2</shortName>
    </alternativeName>
</protein>
<organism>
    <name type="scientific">Bacillus cereus (strain ATCC 10987 / NRS 248)</name>
    <dbReference type="NCBI Taxonomy" id="222523"/>
    <lineage>
        <taxon>Bacteria</taxon>
        <taxon>Bacillati</taxon>
        <taxon>Bacillota</taxon>
        <taxon>Bacilli</taxon>
        <taxon>Bacillales</taxon>
        <taxon>Bacillaceae</taxon>
        <taxon>Bacillus</taxon>
        <taxon>Bacillus cereus group</taxon>
    </lineage>
</organism>
<keyword id="KW-0030">Aminoacyl-tRNA synthetase</keyword>
<keyword id="KW-0067">ATP-binding</keyword>
<keyword id="KW-0963">Cytoplasm</keyword>
<keyword id="KW-0436">Ligase</keyword>
<keyword id="KW-0547">Nucleotide-binding</keyword>
<keyword id="KW-0648">Protein biosynthesis</keyword>
<gene>
    <name evidence="1" type="primary">proS2</name>
    <name type="ordered locus">BCE_0510</name>
</gene>
<name>SYP2_BACC1</name>
<comment type="function">
    <text evidence="1">Catalyzes the attachment of proline to tRNA(Pro) in a two-step reaction: proline is first activated by ATP to form Pro-AMP and then transferred to the acceptor end of tRNA(Pro).</text>
</comment>
<comment type="catalytic activity">
    <reaction evidence="1">
        <text>tRNA(Pro) + L-proline + ATP = L-prolyl-tRNA(Pro) + AMP + diphosphate</text>
        <dbReference type="Rhea" id="RHEA:14305"/>
        <dbReference type="Rhea" id="RHEA-COMP:9700"/>
        <dbReference type="Rhea" id="RHEA-COMP:9702"/>
        <dbReference type="ChEBI" id="CHEBI:30616"/>
        <dbReference type="ChEBI" id="CHEBI:33019"/>
        <dbReference type="ChEBI" id="CHEBI:60039"/>
        <dbReference type="ChEBI" id="CHEBI:78442"/>
        <dbReference type="ChEBI" id="CHEBI:78532"/>
        <dbReference type="ChEBI" id="CHEBI:456215"/>
        <dbReference type="EC" id="6.1.1.15"/>
    </reaction>
</comment>
<comment type="subunit">
    <text evidence="1">Homodimer.</text>
</comment>
<comment type="subcellular location">
    <subcellularLocation>
        <location evidence="1">Cytoplasm</location>
    </subcellularLocation>
</comment>
<comment type="domain">
    <text evidence="1">Consists of three domains: the N-terminal catalytic domain, the anticodon-binding domain and the C-terminal extension.</text>
</comment>
<comment type="similarity">
    <text evidence="1">Belongs to the class-II aminoacyl-tRNA synthetase family. ProS type 3 subfamily.</text>
</comment>
<dbReference type="EC" id="6.1.1.15" evidence="1"/>
<dbReference type="EMBL" id="AE017194">
    <property type="protein sequence ID" value="AAS39445.1"/>
    <property type="molecule type" value="Genomic_DNA"/>
</dbReference>
<dbReference type="SMR" id="Q73E50"/>
<dbReference type="KEGG" id="bca:BCE_0510"/>
<dbReference type="HOGENOM" id="CLU_001882_4_2_9"/>
<dbReference type="Proteomes" id="UP000002527">
    <property type="component" value="Chromosome"/>
</dbReference>
<dbReference type="GO" id="GO:0017101">
    <property type="term" value="C:aminoacyl-tRNA synthetase multienzyme complex"/>
    <property type="evidence" value="ECO:0007669"/>
    <property type="project" value="TreeGrafter"/>
</dbReference>
<dbReference type="GO" id="GO:0005737">
    <property type="term" value="C:cytoplasm"/>
    <property type="evidence" value="ECO:0007669"/>
    <property type="project" value="UniProtKB-SubCell"/>
</dbReference>
<dbReference type="GO" id="GO:0005524">
    <property type="term" value="F:ATP binding"/>
    <property type="evidence" value="ECO:0007669"/>
    <property type="project" value="UniProtKB-UniRule"/>
</dbReference>
<dbReference type="GO" id="GO:0140096">
    <property type="term" value="F:catalytic activity, acting on a protein"/>
    <property type="evidence" value="ECO:0007669"/>
    <property type="project" value="UniProtKB-ARBA"/>
</dbReference>
<dbReference type="GO" id="GO:0004827">
    <property type="term" value="F:proline-tRNA ligase activity"/>
    <property type="evidence" value="ECO:0007669"/>
    <property type="project" value="UniProtKB-UniRule"/>
</dbReference>
<dbReference type="GO" id="GO:0016740">
    <property type="term" value="F:transferase activity"/>
    <property type="evidence" value="ECO:0007669"/>
    <property type="project" value="UniProtKB-ARBA"/>
</dbReference>
<dbReference type="GO" id="GO:0006433">
    <property type="term" value="P:prolyl-tRNA aminoacylation"/>
    <property type="evidence" value="ECO:0007669"/>
    <property type="project" value="UniProtKB-UniRule"/>
</dbReference>
<dbReference type="CDD" id="cd00862">
    <property type="entry name" value="ProRS_anticodon_zinc"/>
    <property type="match status" value="1"/>
</dbReference>
<dbReference type="CDD" id="cd00778">
    <property type="entry name" value="ProRS_core_arch_euk"/>
    <property type="match status" value="1"/>
</dbReference>
<dbReference type="FunFam" id="3.40.50.800:FF:000005">
    <property type="entry name" value="bifunctional glutamate/proline--tRNA ligase"/>
    <property type="match status" value="1"/>
</dbReference>
<dbReference type="FunFam" id="3.30.110.30:FF:000005">
    <property type="entry name" value="Proline--tRNA ligase"/>
    <property type="match status" value="1"/>
</dbReference>
<dbReference type="FunFam" id="3.30.930.10:FF:000023">
    <property type="entry name" value="Proline--tRNA ligase"/>
    <property type="match status" value="1"/>
</dbReference>
<dbReference type="Gene3D" id="3.40.50.800">
    <property type="entry name" value="Anticodon-binding domain"/>
    <property type="match status" value="1"/>
</dbReference>
<dbReference type="Gene3D" id="3.30.930.10">
    <property type="entry name" value="Bira Bifunctional Protein, Domain 2"/>
    <property type="match status" value="1"/>
</dbReference>
<dbReference type="Gene3D" id="3.30.110.30">
    <property type="entry name" value="C-terminal domain of ProRS"/>
    <property type="match status" value="1"/>
</dbReference>
<dbReference type="HAMAP" id="MF_01571">
    <property type="entry name" value="Pro_tRNA_synth_type3"/>
    <property type="match status" value="1"/>
</dbReference>
<dbReference type="InterPro" id="IPR002314">
    <property type="entry name" value="aa-tRNA-synt_IIb"/>
</dbReference>
<dbReference type="InterPro" id="IPR006195">
    <property type="entry name" value="aa-tRNA-synth_II"/>
</dbReference>
<dbReference type="InterPro" id="IPR045864">
    <property type="entry name" value="aa-tRNA-synth_II/BPL/LPL"/>
</dbReference>
<dbReference type="InterPro" id="IPR004154">
    <property type="entry name" value="Anticodon-bd"/>
</dbReference>
<dbReference type="InterPro" id="IPR036621">
    <property type="entry name" value="Anticodon-bd_dom_sf"/>
</dbReference>
<dbReference type="InterPro" id="IPR002316">
    <property type="entry name" value="Pro-tRNA-ligase_IIa"/>
</dbReference>
<dbReference type="InterPro" id="IPR004499">
    <property type="entry name" value="Pro-tRNA-ligase_IIa_arc-type"/>
</dbReference>
<dbReference type="InterPro" id="IPR016061">
    <property type="entry name" value="Pro-tRNA_ligase_II_C"/>
</dbReference>
<dbReference type="InterPro" id="IPR017449">
    <property type="entry name" value="Pro-tRNA_synth_II"/>
</dbReference>
<dbReference type="InterPro" id="IPR033721">
    <property type="entry name" value="ProRS_core_arch_euk"/>
</dbReference>
<dbReference type="NCBIfam" id="TIGR00408">
    <property type="entry name" value="proS_fam_I"/>
    <property type="match status" value="1"/>
</dbReference>
<dbReference type="PANTHER" id="PTHR43382:SF2">
    <property type="entry name" value="BIFUNCTIONAL GLUTAMATE_PROLINE--TRNA LIGASE"/>
    <property type="match status" value="1"/>
</dbReference>
<dbReference type="PANTHER" id="PTHR43382">
    <property type="entry name" value="PROLYL-TRNA SYNTHETASE"/>
    <property type="match status" value="1"/>
</dbReference>
<dbReference type="Pfam" id="PF03129">
    <property type="entry name" value="HGTP_anticodon"/>
    <property type="match status" value="1"/>
</dbReference>
<dbReference type="Pfam" id="PF09180">
    <property type="entry name" value="ProRS-C_1"/>
    <property type="match status" value="1"/>
</dbReference>
<dbReference type="Pfam" id="PF00587">
    <property type="entry name" value="tRNA-synt_2b"/>
    <property type="match status" value="1"/>
</dbReference>
<dbReference type="PRINTS" id="PR01046">
    <property type="entry name" value="TRNASYNTHPRO"/>
</dbReference>
<dbReference type="SMART" id="SM00946">
    <property type="entry name" value="ProRS-C_1"/>
    <property type="match status" value="1"/>
</dbReference>
<dbReference type="SUPFAM" id="SSF64586">
    <property type="entry name" value="C-terminal domain of ProRS"/>
    <property type="match status" value="1"/>
</dbReference>
<dbReference type="SUPFAM" id="SSF52954">
    <property type="entry name" value="Class II aaRS ABD-related"/>
    <property type="match status" value="1"/>
</dbReference>
<dbReference type="SUPFAM" id="SSF55681">
    <property type="entry name" value="Class II aaRS and biotin synthetases"/>
    <property type="match status" value="1"/>
</dbReference>
<dbReference type="PROSITE" id="PS50862">
    <property type="entry name" value="AA_TRNA_LIGASE_II"/>
    <property type="match status" value="1"/>
</dbReference>
<accession>Q73E50</accession>
<reference key="1">
    <citation type="journal article" date="2004" name="Nucleic Acids Res.">
        <title>The genome sequence of Bacillus cereus ATCC 10987 reveals metabolic adaptations and a large plasmid related to Bacillus anthracis pXO1.</title>
        <authorList>
            <person name="Rasko D.A."/>
            <person name="Ravel J."/>
            <person name="Oekstad O.A."/>
            <person name="Helgason E."/>
            <person name="Cer R.Z."/>
            <person name="Jiang L."/>
            <person name="Shores K.A."/>
            <person name="Fouts D.E."/>
            <person name="Tourasse N.J."/>
            <person name="Angiuoli S.V."/>
            <person name="Kolonay J.F."/>
            <person name="Nelson W.C."/>
            <person name="Kolstoe A.-B."/>
            <person name="Fraser C.M."/>
            <person name="Read T.D."/>
        </authorList>
    </citation>
    <scope>NUCLEOTIDE SEQUENCE [LARGE SCALE GENOMIC DNA]</scope>
    <source>
        <strain>ATCC 10987 / NRS 248</strain>
    </source>
</reference>
<sequence>MAKEQVQAITKMEEDFAQWYTDIVKKAELVDYSSVKGCMILRPYGYALWENMQKVMDEKLKATGHENVYMPMFIPESLLQKEKDHVEGFAPEVAWVTHGGDEKLAERLCIRPTSETLFCEHFSKIVQSYNDLPKLYNQWCSVVRWEKTTRPFLRTTEFLWQEGHTIHETAEESQAETLNILNLYASFCEDYLAIPVIKGQKTEKEKFAGAKATYTIESLMHDGKALQTGTSHNFGTNFSEAFDIKFLDRNGKWQYVHQTSWGVSARMIGGLIMVHSDNNGLVMPPKVAPVQVVIVPIAQHKEGVLAKATELQEHIQKVARVKIDASNKTPGWKFNEYEMKGIPIRLEVGPKDIEKNQVVLVRRDTKEKEFIAMEQLEERIPALLEEIHNSLFNKAKVFRDENTYSVTKFEEMKKVADEKQGFIKAMWCGELACEEKLKEEVGVSSRCMPFEQEHLANECICCGKEAKQMVYWGKAY</sequence>